<gene>
    <name type="primary">slcC</name>
    <name type="ordered locus">Csal_1770</name>
</gene>
<feature type="chain" id="PRO_0000418761" description="(S)-sulfolactate dehydrogenase">
    <location>
        <begin position="1"/>
        <end position="309"/>
    </location>
</feature>
<feature type="active site" evidence="1">
    <location>
        <position position="233"/>
    </location>
</feature>
<feature type="active site" evidence="1">
    <location>
        <position position="262"/>
    </location>
</feature>
<feature type="active site" description="Proton donor" evidence="1">
    <location>
        <position position="281"/>
    </location>
</feature>
<feature type="binding site" evidence="1">
    <location>
        <begin position="151"/>
        <end position="152"/>
    </location>
    <ligand>
        <name>NAD(+)</name>
        <dbReference type="ChEBI" id="CHEBI:57540"/>
    </ligand>
</feature>
<feature type="binding site" evidence="1">
    <location>
        <position position="171"/>
    </location>
    <ligand>
        <name>NAD(+)</name>
        <dbReference type="ChEBI" id="CHEBI:57540"/>
    </ligand>
</feature>
<feature type="binding site" evidence="1">
    <location>
        <begin position="231"/>
        <end position="233"/>
    </location>
    <ligand>
        <name>NAD(+)</name>
        <dbReference type="ChEBI" id="CHEBI:57540"/>
    </ligand>
</feature>
<feature type="binding site" evidence="1">
    <location>
        <position position="257"/>
    </location>
    <ligand>
        <name>NAD(+)</name>
        <dbReference type="ChEBI" id="CHEBI:57540"/>
    </ligand>
</feature>
<feature type="binding site" evidence="1">
    <location>
        <begin position="281"/>
        <end position="284"/>
    </location>
    <ligand>
        <name>NAD(+)</name>
        <dbReference type="ChEBI" id="CHEBI:57540"/>
    </ligand>
</feature>
<dbReference type="EC" id="1.1.1.310"/>
<dbReference type="EMBL" id="CP000285">
    <property type="protein sequence ID" value="ABE59122.1"/>
    <property type="molecule type" value="Genomic_DNA"/>
</dbReference>
<dbReference type="RefSeq" id="WP_011507068.1">
    <property type="nucleotide sequence ID" value="NC_007963.1"/>
</dbReference>
<dbReference type="SMR" id="Q1QWN6"/>
<dbReference type="STRING" id="290398.Csal_1770"/>
<dbReference type="GeneID" id="95334482"/>
<dbReference type="KEGG" id="csa:Csal_1770"/>
<dbReference type="eggNOG" id="COG0111">
    <property type="taxonomic scope" value="Bacteria"/>
</dbReference>
<dbReference type="HOGENOM" id="CLU_019796_1_3_6"/>
<dbReference type="OrthoDB" id="9805416at2"/>
<dbReference type="BioCyc" id="MetaCyc:MONOMER-15867"/>
<dbReference type="Proteomes" id="UP000000239">
    <property type="component" value="Chromosome"/>
</dbReference>
<dbReference type="GO" id="GO:0051287">
    <property type="term" value="F:NAD binding"/>
    <property type="evidence" value="ECO:0007669"/>
    <property type="project" value="InterPro"/>
</dbReference>
<dbReference type="GO" id="GO:0102155">
    <property type="term" value="F:S-sulfolactate dehydrogenase activity"/>
    <property type="evidence" value="ECO:0007669"/>
    <property type="project" value="UniProtKB-EC"/>
</dbReference>
<dbReference type="CDD" id="cd12173">
    <property type="entry name" value="PGDH_4"/>
    <property type="match status" value="1"/>
</dbReference>
<dbReference type="FunFam" id="3.40.50.720:FF:000041">
    <property type="entry name" value="D-3-phosphoglycerate dehydrogenase"/>
    <property type="match status" value="1"/>
</dbReference>
<dbReference type="Gene3D" id="3.40.50.720">
    <property type="entry name" value="NAD(P)-binding Rossmann-like Domain"/>
    <property type="match status" value="2"/>
</dbReference>
<dbReference type="InterPro" id="IPR050857">
    <property type="entry name" value="D-2-hydroxyacid_DH"/>
</dbReference>
<dbReference type="InterPro" id="IPR006139">
    <property type="entry name" value="D-isomer_2_OHA_DH_cat_dom"/>
</dbReference>
<dbReference type="InterPro" id="IPR029753">
    <property type="entry name" value="D-isomer_DH_CS"/>
</dbReference>
<dbReference type="InterPro" id="IPR006140">
    <property type="entry name" value="D-isomer_DH_NAD-bd"/>
</dbReference>
<dbReference type="InterPro" id="IPR036291">
    <property type="entry name" value="NAD(P)-bd_dom_sf"/>
</dbReference>
<dbReference type="PANTHER" id="PTHR42789">
    <property type="entry name" value="D-ISOMER SPECIFIC 2-HYDROXYACID DEHYDROGENASE FAMILY PROTEIN (AFU_ORTHOLOGUE AFUA_6G10090)"/>
    <property type="match status" value="1"/>
</dbReference>
<dbReference type="PANTHER" id="PTHR42789:SF1">
    <property type="entry name" value="D-ISOMER SPECIFIC 2-HYDROXYACID DEHYDROGENASE FAMILY PROTEIN (AFU_ORTHOLOGUE AFUA_6G10090)"/>
    <property type="match status" value="1"/>
</dbReference>
<dbReference type="Pfam" id="PF00389">
    <property type="entry name" value="2-Hacid_dh"/>
    <property type="match status" value="1"/>
</dbReference>
<dbReference type="Pfam" id="PF02826">
    <property type="entry name" value="2-Hacid_dh_C"/>
    <property type="match status" value="1"/>
</dbReference>
<dbReference type="SUPFAM" id="SSF52283">
    <property type="entry name" value="Formate/glycerate dehydrogenase catalytic domain-like"/>
    <property type="match status" value="1"/>
</dbReference>
<dbReference type="SUPFAM" id="SSF51735">
    <property type="entry name" value="NAD(P)-binding Rossmann-fold domains"/>
    <property type="match status" value="1"/>
</dbReference>
<dbReference type="PROSITE" id="PS00670">
    <property type="entry name" value="D_2_HYDROXYACID_DH_2"/>
    <property type="match status" value="1"/>
</dbReference>
<dbReference type="PROSITE" id="PS00671">
    <property type="entry name" value="D_2_HYDROXYACID_DH_3"/>
    <property type="match status" value="1"/>
</dbReference>
<reference key="1">
    <citation type="journal article" date="2011" name="Stand. Genomic Sci.">
        <title>Complete genome sequence of the halophilic and highly halotolerant Chromohalobacter salexigens type strain (1H11(T)).</title>
        <authorList>
            <person name="Copeland A."/>
            <person name="O'Connor K."/>
            <person name="Lucas S."/>
            <person name="Lapidus A."/>
            <person name="Berry K.W."/>
            <person name="Detter J.C."/>
            <person name="Del Rio T.G."/>
            <person name="Hammon N."/>
            <person name="Dalin E."/>
            <person name="Tice H."/>
            <person name="Pitluck S."/>
            <person name="Bruce D."/>
            <person name="Goodwin L."/>
            <person name="Han C."/>
            <person name="Tapia R."/>
            <person name="Saunders E."/>
            <person name="Schmutz J."/>
            <person name="Brettin T."/>
            <person name="Larimer F."/>
            <person name="Land M."/>
            <person name="Hauser L."/>
            <person name="Vargas C."/>
            <person name="Nieto J.J."/>
            <person name="Kyrpides N.C."/>
            <person name="Ivanova N."/>
            <person name="Goker M."/>
            <person name="Klenk H.P."/>
            <person name="Csonka L.N."/>
            <person name="Woyke T."/>
        </authorList>
    </citation>
    <scope>NUCLEOTIDE SEQUENCE [LARGE SCALE GENOMIC DNA]</scope>
    <source>
        <strain>ATCC BAA-138 / DSM 3043 / CIP 106854 / NCIMB 13768 / 1H11</strain>
    </source>
</reference>
<reference key="2">
    <citation type="journal article" date="2010" name="Microbiology">
        <title>Racemase activity effected by two dehydrogenases in sulfolactate degradation by Chromohalobacter salexigens: purification of (S)-sulfolactate dehydrogenase.</title>
        <authorList>
            <person name="Denger K."/>
            <person name="Cook A.M."/>
        </authorList>
    </citation>
    <scope>FUNCTION</scope>
    <scope>CATALYTIC ACTIVITY</scope>
    <scope>BIOPHYSICOCHEMICAL PROPERTIES</scope>
    <source>
        <strain>ATCC BAA-138 / DSM 3043 / CIP 106854 / NCIMB 13768 / 1H11</strain>
    </source>
</reference>
<comment type="function">
    <text evidence="2">Dehydrogenase of the (R,S)-sulfolactate degradation pathway that only acts on the (S)-enantiomer of 3-sulfolactate. Together with ComC, provides a racemase system that converts (2S)-3-sulfolactate to (2R)-3-sulfolactate, which is degraded further by (2R)-sulfolactate sulfo-lyase. Specific for NAD. Also able to form sulfolactate from sulfopyruvate.</text>
</comment>
<comment type="catalytic activity">
    <reaction evidence="2">
        <text>(2S)-3-sulfolactate + NAD(+) = 3-sulfopyruvate + NADH + H(+)</text>
        <dbReference type="Rhea" id="RHEA:28194"/>
        <dbReference type="ChEBI" id="CHEBI:15378"/>
        <dbReference type="ChEBI" id="CHEBI:57540"/>
        <dbReference type="ChEBI" id="CHEBI:57940"/>
        <dbReference type="ChEBI" id="CHEBI:57945"/>
        <dbReference type="ChEBI" id="CHEBI:61289"/>
        <dbReference type="EC" id="1.1.1.310"/>
    </reaction>
</comment>
<comment type="biophysicochemical properties">
    <kinetics>
        <KM evidence="2">2 mM for NAD</KM>
        <KM evidence="2">7 mM for (2S)-3-sulfolactate</KM>
    </kinetics>
</comment>
<comment type="similarity">
    <text evidence="3">Belongs to the D-isomer specific 2-hydroxyacid dehydrogenase family.</text>
</comment>
<accession>Q1QWN6</accession>
<organism>
    <name type="scientific">Chromohalobacter salexigens (strain ATCC BAA-138 / DSM 3043 / CIP 106854 / NCIMB 13768 / 1H11)</name>
    <dbReference type="NCBI Taxonomy" id="290398"/>
    <lineage>
        <taxon>Bacteria</taxon>
        <taxon>Pseudomonadati</taxon>
        <taxon>Pseudomonadota</taxon>
        <taxon>Gammaproteobacteria</taxon>
        <taxon>Oceanospirillales</taxon>
        <taxon>Halomonadaceae</taxon>
        <taxon>Chromohalobacter</taxon>
    </lineage>
</organism>
<protein>
    <recommendedName>
        <fullName>(S)-sulfolactate dehydrogenase</fullName>
        <ecNumber>1.1.1.310</ecNumber>
    </recommendedName>
    <alternativeName>
        <fullName>(2S)-3-sulfolactate dehydrogenase</fullName>
    </alternativeName>
    <alternativeName>
        <fullName>(S)-sulfolactate oxidoreductase</fullName>
    </alternativeName>
</protein>
<keyword id="KW-0520">NAD</keyword>
<keyword id="KW-0560">Oxidoreductase</keyword>
<keyword id="KW-1185">Reference proteome</keyword>
<sequence length="309" mass="33135">MSDVLISEFMDEAAVADLERDCSVTFDATLVDDRARLLSSGAGVRALIVRNRTRVDRELLARFPDLRAVGRLGVGLDNIDVDACRESDIAVLPATGGNTVSVAEYVLTGIFMLRRGAYLSTPRVLAGEWPRQALMGHETQGATLGLVGFGGIARDLARRAQCLGMQVMAHDPFVPADDAAWQTVERAERLATLLEKADAVSLHVPLSEGTRHLIDGEALATMKPGSLLINTARGGIVDERALAASLRDRHLGGAMLDVFEEEPLTADSVLSGVEGLIATPHIAGVTHESNERISWITVDNVRRALGVRA</sequence>
<proteinExistence type="evidence at protein level"/>
<name>SLCC_CHRSD</name>
<evidence type="ECO:0000250" key="1"/>
<evidence type="ECO:0000269" key="2">
    <source>
    </source>
</evidence>
<evidence type="ECO:0000305" key="3"/>